<dbReference type="EMBL" id="AB020722">
    <property type="protein sequence ID" value="BAA74938.2"/>
    <property type="status" value="ALT_INIT"/>
    <property type="molecule type" value="mRNA"/>
</dbReference>
<dbReference type="EMBL" id="AK291626">
    <property type="protein sequence ID" value="BAF84315.1"/>
    <property type="molecule type" value="mRNA"/>
</dbReference>
<dbReference type="EMBL" id="AC135178">
    <property type="status" value="NOT_ANNOTATED_CDS"/>
    <property type="molecule type" value="Genomic_DNA"/>
</dbReference>
<dbReference type="EMBL" id="CH471108">
    <property type="protein sequence ID" value="EAW90060.1"/>
    <property type="molecule type" value="Genomic_DNA"/>
</dbReference>
<dbReference type="EMBL" id="BC036749">
    <property type="protein sequence ID" value="AAH36749.1"/>
    <property type="molecule type" value="mRNA"/>
</dbReference>
<dbReference type="CCDS" id="CCDS11139.1"/>
<dbReference type="RefSeq" id="NP_079290.1">
    <property type="nucleotide sequence ID" value="NM_025014.2"/>
</dbReference>
<dbReference type="RefSeq" id="NP_776089.2">
    <property type="nucleotide sequence ID" value="NM_173728.3"/>
</dbReference>
<dbReference type="SMR" id="O94989"/>
<dbReference type="BioGRID" id="116563">
    <property type="interactions" value="47"/>
</dbReference>
<dbReference type="FunCoup" id="O94989">
    <property type="interactions" value="293"/>
</dbReference>
<dbReference type="IntAct" id="O94989">
    <property type="interactions" value="10"/>
</dbReference>
<dbReference type="STRING" id="9606.ENSP00000355026"/>
<dbReference type="CarbonylDB" id="O94989"/>
<dbReference type="GlyGen" id="O94989">
    <property type="glycosylation" value="2 sites"/>
</dbReference>
<dbReference type="iPTMnet" id="O94989"/>
<dbReference type="PhosphoSitePlus" id="O94989"/>
<dbReference type="BioMuta" id="ARHGEF15"/>
<dbReference type="jPOST" id="O94989"/>
<dbReference type="MassIVE" id="O94989"/>
<dbReference type="PaxDb" id="9606-ENSP00000355026"/>
<dbReference type="PeptideAtlas" id="O94989"/>
<dbReference type="ProteomicsDB" id="50618"/>
<dbReference type="Pumba" id="O94989"/>
<dbReference type="Antibodypedia" id="24648">
    <property type="antibodies" value="32 antibodies from 13 providers"/>
</dbReference>
<dbReference type="DNASU" id="22899"/>
<dbReference type="Ensembl" id="ENST00000361926.8">
    <property type="protein sequence ID" value="ENSP00000355026.3"/>
    <property type="gene ID" value="ENSG00000198844.12"/>
</dbReference>
<dbReference type="Ensembl" id="ENST00000421050.2">
    <property type="protein sequence ID" value="ENSP00000412505.1"/>
    <property type="gene ID" value="ENSG00000198844.12"/>
</dbReference>
<dbReference type="GeneID" id="22899"/>
<dbReference type="KEGG" id="hsa:22899"/>
<dbReference type="MANE-Select" id="ENST00000361926.8">
    <property type="protein sequence ID" value="ENSP00000355026.3"/>
    <property type="RefSeq nucleotide sequence ID" value="NM_173728.4"/>
    <property type="RefSeq protein sequence ID" value="NP_776089.2"/>
</dbReference>
<dbReference type="UCSC" id="uc002glc.4">
    <property type="organism name" value="human"/>
</dbReference>
<dbReference type="AGR" id="HGNC:15590"/>
<dbReference type="CTD" id="22899"/>
<dbReference type="DisGeNET" id="22899"/>
<dbReference type="GeneCards" id="ARHGEF15"/>
<dbReference type="HGNC" id="HGNC:15590">
    <property type="gene designation" value="ARHGEF15"/>
</dbReference>
<dbReference type="HPA" id="ENSG00000198844">
    <property type="expression patterns" value="Tissue enhanced (adipose tissue, breast)"/>
</dbReference>
<dbReference type="MalaCards" id="ARHGEF15"/>
<dbReference type="MIM" id="608504">
    <property type="type" value="gene"/>
</dbReference>
<dbReference type="neXtProt" id="NX_O94989"/>
<dbReference type="OpenTargets" id="ENSG00000198844"/>
<dbReference type="PharmGKB" id="PA24970"/>
<dbReference type="VEuPathDB" id="HostDB:ENSG00000198844"/>
<dbReference type="eggNOG" id="KOG3523">
    <property type="taxonomic scope" value="Eukaryota"/>
</dbReference>
<dbReference type="GeneTree" id="ENSGT01030000234571"/>
<dbReference type="HOGENOM" id="CLU_012820_3_0_1"/>
<dbReference type="InParanoid" id="O94989"/>
<dbReference type="OMA" id="QGCPTHR"/>
<dbReference type="OrthoDB" id="27593at2759"/>
<dbReference type="PAN-GO" id="O94989">
    <property type="GO annotations" value="1 GO annotation based on evolutionary models"/>
</dbReference>
<dbReference type="PhylomeDB" id="O94989"/>
<dbReference type="TreeFam" id="TF316357"/>
<dbReference type="PathwayCommons" id="O94989"/>
<dbReference type="Reactome" id="R-HSA-193648">
    <property type="pathway name" value="NRAGE signals death through JNK"/>
</dbReference>
<dbReference type="Reactome" id="R-HSA-416482">
    <property type="pathway name" value="G alpha (12/13) signalling events"/>
</dbReference>
<dbReference type="Reactome" id="R-HSA-8980692">
    <property type="pathway name" value="RHOA GTPase cycle"/>
</dbReference>
<dbReference type="Reactome" id="R-HSA-9013148">
    <property type="pathway name" value="CDC42 GTPase cycle"/>
</dbReference>
<dbReference type="Reactome" id="R-HSA-9013149">
    <property type="pathway name" value="RAC1 GTPase cycle"/>
</dbReference>
<dbReference type="SignaLink" id="O94989"/>
<dbReference type="SIGNOR" id="O94989"/>
<dbReference type="BioGRID-ORCS" id="22899">
    <property type="hits" value="21 hits in 1144 CRISPR screens"/>
</dbReference>
<dbReference type="ChiTaRS" id="ARHGEF15">
    <property type="organism name" value="human"/>
</dbReference>
<dbReference type="GenomeRNAi" id="22899"/>
<dbReference type="Pharos" id="O94989">
    <property type="development level" value="Tbio"/>
</dbReference>
<dbReference type="PRO" id="PR:O94989"/>
<dbReference type="Proteomes" id="UP000005640">
    <property type="component" value="Chromosome 17"/>
</dbReference>
<dbReference type="RNAct" id="O94989">
    <property type="molecule type" value="protein"/>
</dbReference>
<dbReference type="Bgee" id="ENSG00000198844">
    <property type="expression patterns" value="Expressed in apex of heart and 126 other cell types or tissues"/>
</dbReference>
<dbReference type="ExpressionAtlas" id="O94989">
    <property type="expression patterns" value="baseline and differential"/>
</dbReference>
<dbReference type="GO" id="GO:0005737">
    <property type="term" value="C:cytoplasm"/>
    <property type="evidence" value="ECO:0000250"/>
    <property type="project" value="UniProtKB"/>
</dbReference>
<dbReference type="GO" id="GO:0005829">
    <property type="term" value="C:cytosol"/>
    <property type="evidence" value="ECO:0000304"/>
    <property type="project" value="Reactome"/>
</dbReference>
<dbReference type="GO" id="GO:0030425">
    <property type="term" value="C:dendrite"/>
    <property type="evidence" value="ECO:0000250"/>
    <property type="project" value="UniProtKB"/>
</dbReference>
<dbReference type="GO" id="GO:0098978">
    <property type="term" value="C:glutamatergic synapse"/>
    <property type="evidence" value="ECO:0007669"/>
    <property type="project" value="Ensembl"/>
</dbReference>
<dbReference type="GO" id="GO:0098794">
    <property type="term" value="C:postsynapse"/>
    <property type="evidence" value="ECO:0007669"/>
    <property type="project" value="Ensembl"/>
</dbReference>
<dbReference type="GO" id="GO:0005096">
    <property type="term" value="F:GTPase activator activity"/>
    <property type="evidence" value="ECO:0007669"/>
    <property type="project" value="UniProtKB-KW"/>
</dbReference>
<dbReference type="GO" id="GO:0005085">
    <property type="term" value="F:guanyl-nucleotide exchange factor activity"/>
    <property type="evidence" value="ECO:0000314"/>
    <property type="project" value="UniProtKB"/>
</dbReference>
<dbReference type="GO" id="GO:2000297">
    <property type="term" value="P:negative regulation of synapse maturation"/>
    <property type="evidence" value="ECO:0000250"/>
    <property type="project" value="UniProtKB"/>
</dbReference>
<dbReference type="GO" id="GO:0051496">
    <property type="term" value="P:positive regulation of stress fiber assembly"/>
    <property type="evidence" value="ECO:0000250"/>
    <property type="project" value="UniProtKB"/>
</dbReference>
<dbReference type="GO" id="GO:0032956">
    <property type="term" value="P:regulation of actin cytoskeleton organization"/>
    <property type="evidence" value="ECO:0000318"/>
    <property type="project" value="GO_Central"/>
</dbReference>
<dbReference type="GO" id="GO:0150052">
    <property type="term" value="P:regulation of postsynapse assembly"/>
    <property type="evidence" value="ECO:0007669"/>
    <property type="project" value="Ensembl"/>
</dbReference>
<dbReference type="GO" id="GO:0051056">
    <property type="term" value="P:regulation of small GTPase mediated signal transduction"/>
    <property type="evidence" value="ECO:0000304"/>
    <property type="project" value="Reactome"/>
</dbReference>
<dbReference type="GO" id="GO:0061299">
    <property type="term" value="P:retina vasculature morphogenesis in camera-type eye"/>
    <property type="evidence" value="ECO:0007669"/>
    <property type="project" value="Ensembl"/>
</dbReference>
<dbReference type="CDD" id="cd01221">
    <property type="entry name" value="PH_ephexin"/>
    <property type="match status" value="1"/>
</dbReference>
<dbReference type="CDD" id="cd00160">
    <property type="entry name" value="RhoGEF"/>
    <property type="match status" value="1"/>
</dbReference>
<dbReference type="FunFam" id="2.30.29.30:FF:000272">
    <property type="entry name" value="Rho guanine nucleotide exchange factor 15"/>
    <property type="match status" value="1"/>
</dbReference>
<dbReference type="FunFam" id="1.20.900.10:FF:000007">
    <property type="entry name" value="rho guanine nucleotide exchange factor 19"/>
    <property type="match status" value="1"/>
</dbReference>
<dbReference type="Gene3D" id="1.20.900.10">
    <property type="entry name" value="Dbl homology (DH) domain"/>
    <property type="match status" value="1"/>
</dbReference>
<dbReference type="Gene3D" id="2.30.29.30">
    <property type="entry name" value="Pleckstrin-homology domain (PH domain)/Phosphotyrosine-binding domain (PTB)"/>
    <property type="match status" value="1"/>
</dbReference>
<dbReference type="InterPro" id="IPR035899">
    <property type="entry name" value="DBL_dom_sf"/>
</dbReference>
<dbReference type="InterPro" id="IPR000219">
    <property type="entry name" value="DH_dom"/>
</dbReference>
<dbReference type="InterPro" id="IPR047271">
    <property type="entry name" value="Ephexin-like"/>
</dbReference>
<dbReference type="InterPro" id="IPR011993">
    <property type="entry name" value="PH-like_dom_sf"/>
</dbReference>
<dbReference type="InterPro" id="IPR047270">
    <property type="entry name" value="PH_ephexin"/>
</dbReference>
<dbReference type="PANTHER" id="PTHR12845">
    <property type="entry name" value="GUANINE NUCLEOTIDE EXCHANGE FACTOR"/>
    <property type="match status" value="1"/>
</dbReference>
<dbReference type="PANTHER" id="PTHR12845:SF7">
    <property type="entry name" value="RHO GUANINE NUCLEOTIDE EXCHANGE FACTOR 15"/>
    <property type="match status" value="1"/>
</dbReference>
<dbReference type="Pfam" id="PF00621">
    <property type="entry name" value="RhoGEF"/>
    <property type="match status" value="1"/>
</dbReference>
<dbReference type="SMART" id="SM00325">
    <property type="entry name" value="RhoGEF"/>
    <property type="match status" value="1"/>
</dbReference>
<dbReference type="SUPFAM" id="SSF48065">
    <property type="entry name" value="DBL homology domain (DH-domain)"/>
    <property type="match status" value="1"/>
</dbReference>
<dbReference type="SUPFAM" id="SSF50729">
    <property type="entry name" value="PH domain-like"/>
    <property type="match status" value="1"/>
</dbReference>
<dbReference type="PROSITE" id="PS50010">
    <property type="entry name" value="DH_2"/>
    <property type="match status" value="1"/>
</dbReference>
<reference key="1">
    <citation type="journal article" date="1998" name="DNA Res.">
        <title>Prediction of the coding sequences of unidentified human genes. XII. The complete sequences of 100 new cDNA clones from brain which code for large proteins in vitro.</title>
        <authorList>
            <person name="Nagase T."/>
            <person name="Ishikawa K."/>
            <person name="Suyama M."/>
            <person name="Kikuno R."/>
            <person name="Hirosawa M."/>
            <person name="Miyajima N."/>
            <person name="Tanaka A."/>
            <person name="Kotani H."/>
            <person name="Nomura N."/>
            <person name="Ohara O."/>
        </authorList>
    </citation>
    <scope>NUCLEOTIDE SEQUENCE [LARGE SCALE MRNA]</scope>
    <scope>VARIANT PRO-831</scope>
    <source>
        <tissue>Brain</tissue>
    </source>
</reference>
<reference key="2">
    <citation type="journal article" date="2002" name="DNA Res.">
        <title>Construction of expression-ready cDNA clones for KIAA genes: manual curation of 330 KIAA cDNA clones.</title>
        <authorList>
            <person name="Nakajima D."/>
            <person name="Okazaki N."/>
            <person name="Yamakawa H."/>
            <person name="Kikuno R."/>
            <person name="Ohara O."/>
            <person name="Nagase T."/>
        </authorList>
    </citation>
    <scope>SEQUENCE REVISION</scope>
</reference>
<reference key="3">
    <citation type="journal article" date="2004" name="Nat. Genet.">
        <title>Complete sequencing and characterization of 21,243 full-length human cDNAs.</title>
        <authorList>
            <person name="Ota T."/>
            <person name="Suzuki Y."/>
            <person name="Nishikawa T."/>
            <person name="Otsuki T."/>
            <person name="Sugiyama T."/>
            <person name="Irie R."/>
            <person name="Wakamatsu A."/>
            <person name="Hayashi K."/>
            <person name="Sato H."/>
            <person name="Nagai K."/>
            <person name="Kimura K."/>
            <person name="Makita H."/>
            <person name="Sekine M."/>
            <person name="Obayashi M."/>
            <person name="Nishi T."/>
            <person name="Shibahara T."/>
            <person name="Tanaka T."/>
            <person name="Ishii S."/>
            <person name="Yamamoto J."/>
            <person name="Saito K."/>
            <person name="Kawai Y."/>
            <person name="Isono Y."/>
            <person name="Nakamura Y."/>
            <person name="Nagahari K."/>
            <person name="Murakami K."/>
            <person name="Yasuda T."/>
            <person name="Iwayanagi T."/>
            <person name="Wagatsuma M."/>
            <person name="Shiratori A."/>
            <person name="Sudo H."/>
            <person name="Hosoiri T."/>
            <person name="Kaku Y."/>
            <person name="Kodaira H."/>
            <person name="Kondo H."/>
            <person name="Sugawara M."/>
            <person name="Takahashi M."/>
            <person name="Kanda K."/>
            <person name="Yokoi T."/>
            <person name="Furuya T."/>
            <person name="Kikkawa E."/>
            <person name="Omura Y."/>
            <person name="Abe K."/>
            <person name="Kamihara K."/>
            <person name="Katsuta N."/>
            <person name="Sato K."/>
            <person name="Tanikawa M."/>
            <person name="Yamazaki M."/>
            <person name="Ninomiya K."/>
            <person name="Ishibashi T."/>
            <person name="Yamashita H."/>
            <person name="Murakawa K."/>
            <person name="Fujimori K."/>
            <person name="Tanai H."/>
            <person name="Kimata M."/>
            <person name="Watanabe M."/>
            <person name="Hiraoka S."/>
            <person name="Chiba Y."/>
            <person name="Ishida S."/>
            <person name="Ono Y."/>
            <person name="Takiguchi S."/>
            <person name="Watanabe S."/>
            <person name="Yosida M."/>
            <person name="Hotuta T."/>
            <person name="Kusano J."/>
            <person name="Kanehori K."/>
            <person name="Takahashi-Fujii A."/>
            <person name="Hara H."/>
            <person name="Tanase T.-O."/>
            <person name="Nomura Y."/>
            <person name="Togiya S."/>
            <person name="Komai F."/>
            <person name="Hara R."/>
            <person name="Takeuchi K."/>
            <person name="Arita M."/>
            <person name="Imose N."/>
            <person name="Musashino K."/>
            <person name="Yuuki H."/>
            <person name="Oshima A."/>
            <person name="Sasaki N."/>
            <person name="Aotsuka S."/>
            <person name="Yoshikawa Y."/>
            <person name="Matsunawa H."/>
            <person name="Ichihara T."/>
            <person name="Shiohata N."/>
            <person name="Sano S."/>
            <person name="Moriya S."/>
            <person name="Momiyama H."/>
            <person name="Satoh N."/>
            <person name="Takami S."/>
            <person name="Terashima Y."/>
            <person name="Suzuki O."/>
            <person name="Nakagawa S."/>
            <person name="Senoh A."/>
            <person name="Mizoguchi H."/>
            <person name="Goto Y."/>
            <person name="Shimizu F."/>
            <person name="Wakebe H."/>
            <person name="Hishigaki H."/>
            <person name="Watanabe T."/>
            <person name="Sugiyama A."/>
            <person name="Takemoto M."/>
            <person name="Kawakami B."/>
            <person name="Yamazaki M."/>
            <person name="Watanabe K."/>
            <person name="Kumagai A."/>
            <person name="Itakura S."/>
            <person name="Fukuzumi Y."/>
            <person name="Fujimori Y."/>
            <person name="Komiyama M."/>
            <person name="Tashiro H."/>
            <person name="Tanigami A."/>
            <person name="Fujiwara T."/>
            <person name="Ono T."/>
            <person name="Yamada K."/>
            <person name="Fujii Y."/>
            <person name="Ozaki K."/>
            <person name="Hirao M."/>
            <person name="Ohmori Y."/>
            <person name="Kawabata A."/>
            <person name="Hikiji T."/>
            <person name="Kobatake N."/>
            <person name="Inagaki H."/>
            <person name="Ikema Y."/>
            <person name="Okamoto S."/>
            <person name="Okitani R."/>
            <person name="Kawakami T."/>
            <person name="Noguchi S."/>
            <person name="Itoh T."/>
            <person name="Shigeta K."/>
            <person name="Senba T."/>
            <person name="Matsumura K."/>
            <person name="Nakajima Y."/>
            <person name="Mizuno T."/>
            <person name="Morinaga M."/>
            <person name="Sasaki M."/>
            <person name="Togashi T."/>
            <person name="Oyama M."/>
            <person name="Hata H."/>
            <person name="Watanabe M."/>
            <person name="Komatsu T."/>
            <person name="Mizushima-Sugano J."/>
            <person name="Satoh T."/>
            <person name="Shirai Y."/>
            <person name="Takahashi Y."/>
            <person name="Nakagawa K."/>
            <person name="Okumura K."/>
            <person name="Nagase T."/>
            <person name="Nomura N."/>
            <person name="Kikuchi H."/>
            <person name="Masuho Y."/>
            <person name="Yamashita R."/>
            <person name="Nakai K."/>
            <person name="Yada T."/>
            <person name="Nakamura Y."/>
            <person name="Ohara O."/>
            <person name="Isogai T."/>
            <person name="Sugano S."/>
        </authorList>
    </citation>
    <scope>NUCLEOTIDE SEQUENCE [LARGE SCALE MRNA]</scope>
    <scope>VARIANTS PRO-277 AND PRO-831</scope>
    <source>
        <tissue>Placenta</tissue>
    </source>
</reference>
<reference key="4">
    <citation type="journal article" date="2006" name="Nature">
        <title>DNA sequence of human chromosome 17 and analysis of rearrangement in the human lineage.</title>
        <authorList>
            <person name="Zody M.C."/>
            <person name="Garber M."/>
            <person name="Adams D.J."/>
            <person name="Sharpe T."/>
            <person name="Harrow J."/>
            <person name="Lupski J.R."/>
            <person name="Nicholson C."/>
            <person name="Searle S.M."/>
            <person name="Wilming L."/>
            <person name="Young S.K."/>
            <person name="Abouelleil A."/>
            <person name="Allen N.R."/>
            <person name="Bi W."/>
            <person name="Bloom T."/>
            <person name="Borowsky M.L."/>
            <person name="Bugalter B.E."/>
            <person name="Butler J."/>
            <person name="Chang J.L."/>
            <person name="Chen C.-K."/>
            <person name="Cook A."/>
            <person name="Corum B."/>
            <person name="Cuomo C.A."/>
            <person name="de Jong P.J."/>
            <person name="DeCaprio D."/>
            <person name="Dewar K."/>
            <person name="FitzGerald M."/>
            <person name="Gilbert J."/>
            <person name="Gibson R."/>
            <person name="Gnerre S."/>
            <person name="Goldstein S."/>
            <person name="Grafham D.V."/>
            <person name="Grocock R."/>
            <person name="Hafez N."/>
            <person name="Hagopian D.S."/>
            <person name="Hart E."/>
            <person name="Norman C.H."/>
            <person name="Humphray S."/>
            <person name="Jaffe D.B."/>
            <person name="Jones M."/>
            <person name="Kamal M."/>
            <person name="Khodiyar V.K."/>
            <person name="LaButti K."/>
            <person name="Laird G."/>
            <person name="Lehoczky J."/>
            <person name="Liu X."/>
            <person name="Lokyitsang T."/>
            <person name="Loveland J."/>
            <person name="Lui A."/>
            <person name="Macdonald P."/>
            <person name="Major J.E."/>
            <person name="Matthews L."/>
            <person name="Mauceli E."/>
            <person name="McCarroll S.A."/>
            <person name="Mihalev A.H."/>
            <person name="Mudge J."/>
            <person name="Nguyen C."/>
            <person name="Nicol R."/>
            <person name="O'Leary S.B."/>
            <person name="Osoegawa K."/>
            <person name="Schwartz D.C."/>
            <person name="Shaw-Smith C."/>
            <person name="Stankiewicz P."/>
            <person name="Steward C."/>
            <person name="Swarbreck D."/>
            <person name="Venkataraman V."/>
            <person name="Whittaker C.A."/>
            <person name="Yang X."/>
            <person name="Zimmer A.R."/>
            <person name="Bradley A."/>
            <person name="Hubbard T."/>
            <person name="Birren B.W."/>
            <person name="Rogers J."/>
            <person name="Lander E.S."/>
            <person name="Nusbaum C."/>
        </authorList>
    </citation>
    <scope>NUCLEOTIDE SEQUENCE [LARGE SCALE GENOMIC DNA]</scope>
</reference>
<reference key="5">
    <citation type="submission" date="2005-09" db="EMBL/GenBank/DDBJ databases">
        <authorList>
            <person name="Mural R.J."/>
            <person name="Istrail S."/>
            <person name="Sutton G.G."/>
            <person name="Florea L."/>
            <person name="Halpern A.L."/>
            <person name="Mobarry C.M."/>
            <person name="Lippert R."/>
            <person name="Walenz B."/>
            <person name="Shatkay H."/>
            <person name="Dew I."/>
            <person name="Miller J.R."/>
            <person name="Flanigan M.J."/>
            <person name="Edwards N.J."/>
            <person name="Bolanos R."/>
            <person name="Fasulo D."/>
            <person name="Halldorsson B.V."/>
            <person name="Hannenhalli S."/>
            <person name="Turner R."/>
            <person name="Yooseph S."/>
            <person name="Lu F."/>
            <person name="Nusskern D.R."/>
            <person name="Shue B.C."/>
            <person name="Zheng X.H."/>
            <person name="Zhong F."/>
            <person name="Delcher A.L."/>
            <person name="Huson D.H."/>
            <person name="Kravitz S.A."/>
            <person name="Mouchard L."/>
            <person name="Reinert K."/>
            <person name="Remington K.A."/>
            <person name="Clark A.G."/>
            <person name="Waterman M.S."/>
            <person name="Eichler E.E."/>
            <person name="Adams M.D."/>
            <person name="Hunkapiller M.W."/>
            <person name="Myers E.W."/>
            <person name="Venter J.C."/>
        </authorList>
    </citation>
    <scope>NUCLEOTIDE SEQUENCE [LARGE SCALE GENOMIC DNA]</scope>
    <scope>VARIANTS PRO-277 AND PRO-831</scope>
</reference>
<reference key="6">
    <citation type="journal article" date="2004" name="Genome Res.">
        <title>The status, quality, and expansion of the NIH full-length cDNA project: the Mammalian Gene Collection (MGC).</title>
        <authorList>
            <consortium name="The MGC Project Team"/>
        </authorList>
    </citation>
    <scope>NUCLEOTIDE SEQUENCE [LARGE SCALE MRNA]</scope>
    <scope>VARIANTS VAL-155; PRO-277 AND PRO-831</scope>
    <source>
        <tissue>Lung</tissue>
    </source>
</reference>
<reference key="7">
    <citation type="journal article" date="2003" name="Circ. Res.">
        <title>EphA4-mediated Rho activation via Vsm-RhoGEF expressed specifically in vascular smooth muscle cells.</title>
        <authorList>
            <person name="Ogita H."/>
            <person name="Kunimoto S."/>
            <person name="Kamioka Y."/>
            <person name="Sawa H."/>
            <person name="Masuda M."/>
            <person name="Mochizuki N."/>
        </authorList>
    </citation>
    <scope>FUNCTION</scope>
    <scope>TISSUE SPECIFICITY</scope>
    <scope>PHOSPHORYLATION</scope>
    <scope>INTERACTION WITH EPHA4</scope>
    <scope>REGULATION</scope>
</reference>
<reference key="8">
    <citation type="journal article" date="2013" name="Epilepsia">
        <title>Exome sequencing reveals new causal mutations in children with epileptic encephalopathies.</title>
        <authorList>
            <person name="Veeramah K.R."/>
            <person name="Johnstone L."/>
            <person name="Karafet T.M."/>
            <person name="Wolf D."/>
            <person name="Sprissler R."/>
            <person name="Salogiannis J."/>
            <person name="Barth-Maron A."/>
            <person name="Greenberg M.E."/>
            <person name="Stuhlmann T."/>
            <person name="Weinert S."/>
            <person name="Jentsch T.J."/>
            <person name="Pazzi M."/>
            <person name="Restifo L.L."/>
            <person name="Talwar D."/>
            <person name="Erickson R.P."/>
            <person name="Hammer M.F."/>
        </authorList>
    </citation>
    <scope>VARIANT CYS-604</scope>
</reference>
<comment type="function">
    <text evidence="6">Specific GEF for RhoA activation. Does not activate RAC1 or CDC42. Regulates vascular smooth muscle contractility. Negatively regulates excitatory synapse development by suppressing the synapse-promoting activity of EPHB2.</text>
</comment>
<comment type="subunit">
    <text evidence="1 6">Interacts with EPHB2 (By similarity). Interacts with EPHA4.</text>
</comment>
<comment type="interaction">
    <interactant intactId="EBI-740691">
        <id>O94989</id>
    </interactant>
    <interactant intactId="EBI-747776">
        <id>Q53EZ4</id>
        <label>CEP55</label>
    </interactant>
    <organismsDiffer>false</organismsDiffer>
    <experiments>9</experiments>
</comment>
<comment type="interaction">
    <interactant intactId="EBI-740691">
        <id>O94989</id>
    </interactant>
    <interactant intactId="EBI-739467">
        <id>Q9H8Y8</id>
        <label>GORASP2</label>
    </interactant>
    <organismsDiffer>false</organismsDiffer>
    <experiments>3</experiments>
</comment>
<comment type="interaction">
    <interactant intactId="EBI-740691">
        <id>O94989</id>
    </interactant>
    <interactant intactId="EBI-742828">
        <id>Q14847</id>
        <label>LASP1</label>
    </interactant>
    <organismsDiffer>false</organismsDiffer>
    <experiments>3</experiments>
</comment>
<comment type="interaction">
    <interactant intactId="EBI-740691">
        <id>O94989</id>
    </interactant>
    <interactant intactId="EBI-714158">
        <id>Q13526</id>
        <label>PIN1</label>
    </interactant>
    <organismsDiffer>false</organismsDiffer>
    <experiments>3</experiments>
</comment>
<comment type="interaction">
    <interactant intactId="EBI-740691">
        <id>O94989</id>
    </interactant>
    <interactant intactId="EBI-4280187">
        <id>Q13976-2</id>
        <label>PRKG1</label>
    </interactant>
    <organismsDiffer>false</organismsDiffer>
    <experiments>3</experiments>
</comment>
<comment type="subcellular location">
    <subcellularLocation>
        <location evidence="1">Cell projection</location>
        <location evidence="1">Dendrite</location>
    </subcellularLocation>
    <text evidence="1">Expressed exclusively in dendrites of the developing hippocampus.</text>
</comment>
<comment type="tissue specificity">
    <text evidence="6">Expressed in the vascular smooth muscle of coronary artery.</text>
</comment>
<comment type="PTM">
    <text evidence="1">Phosphorylated on tyrosine residues upon EFNA1 stimulation. EPHB2-dependent phosphorylation at Tyr-353 triggers UBE3A-mediated ubiquitination (By similarity).</text>
</comment>
<comment type="PTM">
    <text evidence="1">Ubiquitinated; UBE3A-mediated ubiquitination and degradation by the proteasome promotes EFNB1-dependent synapse formation.</text>
</comment>
<comment type="sequence caution" evidence="11">
    <conflict type="erroneous initiation">
        <sequence resource="EMBL-CDS" id="BAA74938"/>
    </conflict>
    <text>Extended N-terminus.</text>
</comment>
<name>ARHGF_HUMAN</name>
<feature type="chain" id="PRO_0000080932" description="Rho guanine nucleotide exchange factor 15">
    <location>
        <begin position="1"/>
        <end position="841"/>
    </location>
</feature>
<feature type="domain" description="DH" evidence="3">
    <location>
        <begin position="417"/>
        <end position="601"/>
    </location>
</feature>
<feature type="region of interest" description="Disordered" evidence="4">
    <location>
        <begin position="1"/>
        <end position="179"/>
    </location>
</feature>
<feature type="region of interest" description="Disordered" evidence="4">
    <location>
        <begin position="239"/>
        <end position="261"/>
    </location>
</feature>
<feature type="region of interest" description="Disordered" evidence="4">
    <location>
        <begin position="279"/>
        <end position="333"/>
    </location>
</feature>
<feature type="region of interest" description="Disordered" evidence="4">
    <location>
        <begin position="765"/>
        <end position="793"/>
    </location>
</feature>
<feature type="compositionally biased region" description="Polar residues" evidence="4">
    <location>
        <begin position="39"/>
        <end position="53"/>
    </location>
</feature>
<feature type="compositionally biased region" description="Low complexity" evidence="4">
    <location>
        <begin position="65"/>
        <end position="110"/>
    </location>
</feature>
<feature type="compositionally biased region" description="Pro residues" evidence="4">
    <location>
        <begin position="111"/>
        <end position="124"/>
    </location>
</feature>
<feature type="modified residue" description="Phosphoserine" evidence="2">
    <location>
        <position position="107"/>
    </location>
</feature>
<feature type="modified residue" description="Phosphoserine" evidence="2">
    <location>
        <position position="109"/>
    </location>
</feature>
<feature type="modified residue" description="Phosphotyrosine; by EPHB2" evidence="2">
    <location>
        <position position="353"/>
    </location>
</feature>
<feature type="sequence variant" id="VAR_057189" description="In dbSNP:rs9890841.">
    <original>P</original>
    <variation>S</variation>
    <location>
        <position position="73"/>
    </location>
</feature>
<feature type="sequence variant" id="VAR_054215" description="In dbSNP:rs17857129." evidence="8">
    <original>G</original>
    <variation>V</variation>
    <location>
        <position position="155"/>
    </location>
</feature>
<feature type="sequence variant" id="VAR_054216" description="In dbSNP:rs871841." evidence="7 8 10">
    <original>L</original>
    <variation>P</variation>
    <location>
        <position position="277"/>
    </location>
</feature>
<feature type="sequence variant" id="VAR_077835" description="Found in a child with sporadic epilepsy; uncertain significance; dbSNP:rs587777166." evidence="9">
    <original>R</original>
    <variation>C</variation>
    <location>
        <position position="604"/>
    </location>
</feature>
<feature type="sequence variant" id="VAR_054217" description="In dbSNP:rs3744647." evidence="5 7 8 10">
    <original>S</original>
    <variation>P</variation>
    <location>
        <position position="831"/>
    </location>
</feature>
<gene>
    <name type="primary">ARHGEF15</name>
    <name type="synonym">KIAA0915</name>
</gene>
<sequence length="841" mass="91940">MSAQSLPAATPPTQKPPRIIRPRPPSRSRAAQSPGPPHNGSSPQELPRNSNDAPTPMCTPIFWEPPAASLKPPALLPPSASRASLDSQTSPDSPSSTPTPSPVSRRSASPEPAPRSPVPPPKPSGSPCTPLLPMAGVLAQNGSASAPGTVRRLAGRFEGGAEGRAQDADAPEPGLQARADVNGEREAPLTGSGSQENGAPDAGLACPPCCPCVCHTTRPGLELRWVPVGGYEEVPRVPRRASPLRTSRSRPHPPSIGHPAVVLTSYRSTAERKLLPLLKPPKPTRVRQDATIFGDPPQPDLDLLSEDGIQTGDSPDEAPQNTPPATVEGREEEGLEVLKEQNWELPLQDEPLYQTYRAAVLSEELWGVGEDGSPSPANAGDAPTFPRPPGPRNTLWQELPAVQASGLLDTLSPQERRMQESLFEVVTSEASYLRSLRLLTDTFVLSQALRDTLTPRDHHTLFSNVQRVQGVSERFLATLLSRVRSSPHISDLCDVVHAHAVGPFSVYVDYVRNQQYQEETYSRLMDTNVRFSAELRRLQSLPKCERLPLPSFLLLPFQRITRLRMLLQNILRQTEEGSSRQENAQKALGAVSKIIERCSAEVGRMKQTEELIRLTQRLRFHKVKALPLVSWSRRLEFQGELTELGCRRGGVLFASRPRFTPLCLLLFSDLLLITQPKSGQRLQVLDYAHRSLVQAQQVPDPSGPPTFRLSLLSNHQGRPTHRLLQASSLSDMQRWLGAFPTPGPLPCSPDTIYEDCDCSQELCSESSAPAKTEGRSLESRAAPKHLHKTPEGWLKGLPGAFPAQLVCEVTGEHERRRHLRQNQRLLEAVGSSSGTPNAPPP</sequence>
<accession>O94989</accession>
<accession>A8K6G1</accession>
<accession>Q8N449</accession>
<accession>Q9H8B4</accession>
<protein>
    <recommendedName>
        <fullName>Rho guanine nucleotide exchange factor 15</fullName>
    </recommendedName>
    <alternativeName>
        <fullName>Ephexin-5</fullName>
        <shortName>E5</shortName>
    </alternativeName>
    <alternativeName>
        <fullName>Vsm-RhoGEF</fullName>
    </alternativeName>
</protein>
<keyword id="KW-0966">Cell projection</keyword>
<keyword id="KW-0343">GTPase activation</keyword>
<keyword id="KW-0344">Guanine-nucleotide releasing factor</keyword>
<keyword id="KW-0597">Phosphoprotein</keyword>
<keyword id="KW-1267">Proteomics identification</keyword>
<keyword id="KW-1185">Reference proteome</keyword>
<keyword id="KW-0832">Ubl conjugation</keyword>
<evidence type="ECO:0000250" key="1"/>
<evidence type="ECO:0000250" key="2">
    <source>
        <dbReference type="UniProtKB" id="Q5FWH6"/>
    </source>
</evidence>
<evidence type="ECO:0000255" key="3">
    <source>
        <dbReference type="PROSITE-ProRule" id="PRU00062"/>
    </source>
</evidence>
<evidence type="ECO:0000256" key="4">
    <source>
        <dbReference type="SAM" id="MobiDB-lite"/>
    </source>
</evidence>
<evidence type="ECO:0000269" key="5">
    <source>
    </source>
</evidence>
<evidence type="ECO:0000269" key="6">
    <source>
    </source>
</evidence>
<evidence type="ECO:0000269" key="7">
    <source>
    </source>
</evidence>
<evidence type="ECO:0000269" key="8">
    <source>
    </source>
</evidence>
<evidence type="ECO:0000269" key="9">
    <source>
    </source>
</evidence>
<evidence type="ECO:0000269" key="10">
    <source ref="5"/>
</evidence>
<evidence type="ECO:0000305" key="11"/>
<organism>
    <name type="scientific">Homo sapiens</name>
    <name type="common">Human</name>
    <dbReference type="NCBI Taxonomy" id="9606"/>
    <lineage>
        <taxon>Eukaryota</taxon>
        <taxon>Metazoa</taxon>
        <taxon>Chordata</taxon>
        <taxon>Craniata</taxon>
        <taxon>Vertebrata</taxon>
        <taxon>Euteleostomi</taxon>
        <taxon>Mammalia</taxon>
        <taxon>Eutheria</taxon>
        <taxon>Euarchontoglires</taxon>
        <taxon>Primates</taxon>
        <taxon>Haplorrhini</taxon>
        <taxon>Catarrhini</taxon>
        <taxon>Hominidae</taxon>
        <taxon>Homo</taxon>
    </lineage>
</organism>
<proteinExistence type="evidence at protein level"/>